<name>LPXK_HAHCH</name>
<sequence length="338" mass="37293">MIAWVERVWYGGSRWKFLLWPLSWLYLLVVAIRKTLFAVIKSSASEAGSASIRPPIIVVGNLTVGGAGKTPLVVALVEHFQRRGLRPGVVSRGYGGVSESYPVLVERNPDPGVTGDEPALIYMRTGCPVVVAPKRAQALQTLLDMYDCDVVISDDGLQHLALPRDMEVVVVDAQRGWGNGLCLPAGPLREPVRRLQSVDLVVSNGLHAQVNADYTMQLRPGRWKKVSGDEERGVNYFAGYTAHAVAAIGNPGRFFATLADLDVASIQHAFPDHYSYAQKDIEFNDDLPVLMTEKDAVKCKSFNLENAWYLEVGAELNSAFYERVDARLNELRSHKKDG</sequence>
<protein>
    <recommendedName>
        <fullName evidence="1">Tetraacyldisaccharide 4'-kinase</fullName>
        <ecNumber evidence="1">2.7.1.130</ecNumber>
    </recommendedName>
    <alternativeName>
        <fullName evidence="1">Lipid A 4'-kinase</fullName>
    </alternativeName>
</protein>
<dbReference type="EC" id="2.7.1.130" evidence="1"/>
<dbReference type="EMBL" id="CP000155">
    <property type="protein sequence ID" value="ABC29490.1"/>
    <property type="molecule type" value="Genomic_DNA"/>
</dbReference>
<dbReference type="RefSeq" id="WP_011396559.1">
    <property type="nucleotide sequence ID" value="NC_007645.1"/>
</dbReference>
<dbReference type="SMR" id="Q2SIN4"/>
<dbReference type="STRING" id="349521.HCH_02704"/>
<dbReference type="KEGG" id="hch:HCH_02704"/>
<dbReference type="eggNOG" id="COG1663">
    <property type="taxonomic scope" value="Bacteria"/>
</dbReference>
<dbReference type="HOGENOM" id="CLU_038816_2_0_6"/>
<dbReference type="OrthoDB" id="9766423at2"/>
<dbReference type="UniPathway" id="UPA00359">
    <property type="reaction ID" value="UER00482"/>
</dbReference>
<dbReference type="Proteomes" id="UP000000238">
    <property type="component" value="Chromosome"/>
</dbReference>
<dbReference type="GO" id="GO:0005886">
    <property type="term" value="C:plasma membrane"/>
    <property type="evidence" value="ECO:0007669"/>
    <property type="project" value="TreeGrafter"/>
</dbReference>
<dbReference type="GO" id="GO:0005524">
    <property type="term" value="F:ATP binding"/>
    <property type="evidence" value="ECO:0007669"/>
    <property type="project" value="UniProtKB-UniRule"/>
</dbReference>
<dbReference type="GO" id="GO:0009029">
    <property type="term" value="F:tetraacyldisaccharide 4'-kinase activity"/>
    <property type="evidence" value="ECO:0007669"/>
    <property type="project" value="UniProtKB-UniRule"/>
</dbReference>
<dbReference type="GO" id="GO:0009245">
    <property type="term" value="P:lipid A biosynthetic process"/>
    <property type="evidence" value="ECO:0007669"/>
    <property type="project" value="UniProtKB-UniRule"/>
</dbReference>
<dbReference type="GO" id="GO:0009244">
    <property type="term" value="P:lipopolysaccharide core region biosynthetic process"/>
    <property type="evidence" value="ECO:0007669"/>
    <property type="project" value="TreeGrafter"/>
</dbReference>
<dbReference type="CDD" id="cd01983">
    <property type="entry name" value="SIMIBI"/>
    <property type="match status" value="1"/>
</dbReference>
<dbReference type="HAMAP" id="MF_00409">
    <property type="entry name" value="LpxK"/>
    <property type="match status" value="1"/>
</dbReference>
<dbReference type="InterPro" id="IPR003758">
    <property type="entry name" value="LpxK"/>
</dbReference>
<dbReference type="InterPro" id="IPR027417">
    <property type="entry name" value="P-loop_NTPase"/>
</dbReference>
<dbReference type="NCBIfam" id="TIGR00682">
    <property type="entry name" value="lpxK"/>
    <property type="match status" value="1"/>
</dbReference>
<dbReference type="PANTHER" id="PTHR42724">
    <property type="entry name" value="TETRAACYLDISACCHARIDE 4'-KINASE"/>
    <property type="match status" value="1"/>
</dbReference>
<dbReference type="PANTHER" id="PTHR42724:SF1">
    <property type="entry name" value="TETRAACYLDISACCHARIDE 4'-KINASE, MITOCHONDRIAL-RELATED"/>
    <property type="match status" value="1"/>
</dbReference>
<dbReference type="Pfam" id="PF02606">
    <property type="entry name" value="LpxK"/>
    <property type="match status" value="1"/>
</dbReference>
<dbReference type="SUPFAM" id="SSF52540">
    <property type="entry name" value="P-loop containing nucleoside triphosphate hydrolases"/>
    <property type="match status" value="1"/>
</dbReference>
<keyword id="KW-0067">ATP-binding</keyword>
<keyword id="KW-0418">Kinase</keyword>
<keyword id="KW-0441">Lipid A biosynthesis</keyword>
<keyword id="KW-0444">Lipid biosynthesis</keyword>
<keyword id="KW-0443">Lipid metabolism</keyword>
<keyword id="KW-0547">Nucleotide-binding</keyword>
<keyword id="KW-1185">Reference proteome</keyword>
<keyword id="KW-0808">Transferase</keyword>
<feature type="chain" id="PRO_0000291207" description="Tetraacyldisaccharide 4'-kinase">
    <location>
        <begin position="1"/>
        <end position="338"/>
    </location>
</feature>
<feature type="binding site" evidence="1">
    <location>
        <begin position="63"/>
        <end position="70"/>
    </location>
    <ligand>
        <name>ATP</name>
        <dbReference type="ChEBI" id="CHEBI:30616"/>
    </ligand>
</feature>
<reference key="1">
    <citation type="journal article" date="2005" name="Nucleic Acids Res.">
        <title>Genomic blueprint of Hahella chejuensis, a marine microbe producing an algicidal agent.</title>
        <authorList>
            <person name="Jeong H."/>
            <person name="Yim J.H."/>
            <person name="Lee C."/>
            <person name="Choi S.-H."/>
            <person name="Park Y.K."/>
            <person name="Yoon S.H."/>
            <person name="Hur C.-G."/>
            <person name="Kang H.-Y."/>
            <person name="Kim D."/>
            <person name="Lee H.H."/>
            <person name="Park K.H."/>
            <person name="Park S.-H."/>
            <person name="Park H.-S."/>
            <person name="Lee H.K."/>
            <person name="Oh T.K."/>
            <person name="Kim J.F."/>
        </authorList>
    </citation>
    <scope>NUCLEOTIDE SEQUENCE [LARGE SCALE GENOMIC DNA]</scope>
    <source>
        <strain>KCTC 2396</strain>
    </source>
</reference>
<evidence type="ECO:0000255" key="1">
    <source>
        <dbReference type="HAMAP-Rule" id="MF_00409"/>
    </source>
</evidence>
<proteinExistence type="inferred from homology"/>
<gene>
    <name evidence="1" type="primary">lpxK</name>
    <name type="ordered locus">HCH_02704</name>
</gene>
<organism>
    <name type="scientific">Hahella chejuensis (strain KCTC 2396)</name>
    <dbReference type="NCBI Taxonomy" id="349521"/>
    <lineage>
        <taxon>Bacteria</taxon>
        <taxon>Pseudomonadati</taxon>
        <taxon>Pseudomonadota</taxon>
        <taxon>Gammaproteobacteria</taxon>
        <taxon>Oceanospirillales</taxon>
        <taxon>Hahellaceae</taxon>
        <taxon>Hahella</taxon>
    </lineage>
</organism>
<accession>Q2SIN4</accession>
<comment type="function">
    <text evidence="1">Transfers the gamma-phosphate of ATP to the 4'-position of a tetraacyldisaccharide 1-phosphate intermediate (termed DS-1-P) to form tetraacyldisaccharide 1,4'-bis-phosphate (lipid IVA).</text>
</comment>
<comment type="catalytic activity">
    <reaction evidence="1">
        <text>a lipid A disaccharide + ATP = a lipid IVA + ADP + H(+)</text>
        <dbReference type="Rhea" id="RHEA:67840"/>
        <dbReference type="ChEBI" id="CHEBI:15378"/>
        <dbReference type="ChEBI" id="CHEBI:30616"/>
        <dbReference type="ChEBI" id="CHEBI:176343"/>
        <dbReference type="ChEBI" id="CHEBI:176425"/>
        <dbReference type="ChEBI" id="CHEBI:456216"/>
        <dbReference type="EC" id="2.7.1.130"/>
    </reaction>
</comment>
<comment type="pathway">
    <text evidence="1">Glycolipid biosynthesis; lipid IV(A) biosynthesis; lipid IV(A) from (3R)-3-hydroxytetradecanoyl-[acyl-carrier-protein] and UDP-N-acetyl-alpha-D-glucosamine: step 6/6.</text>
</comment>
<comment type="similarity">
    <text evidence="1">Belongs to the LpxK family.</text>
</comment>